<name>RPIA_LISMF</name>
<dbReference type="EC" id="5.3.1.6" evidence="1"/>
<dbReference type="EMBL" id="AE017262">
    <property type="protein sequence ID" value="AAT03774.1"/>
    <property type="molecule type" value="Genomic_DNA"/>
</dbReference>
<dbReference type="RefSeq" id="WP_003727063.1">
    <property type="nucleotide sequence ID" value="NC_002973.6"/>
</dbReference>
<dbReference type="SMR" id="Q721J0"/>
<dbReference type="KEGG" id="lmf:LMOf2365_0996"/>
<dbReference type="HOGENOM" id="CLU_056590_1_0_9"/>
<dbReference type="UniPathway" id="UPA00115">
    <property type="reaction ID" value="UER00412"/>
</dbReference>
<dbReference type="GO" id="GO:0004751">
    <property type="term" value="F:ribose-5-phosphate isomerase activity"/>
    <property type="evidence" value="ECO:0007669"/>
    <property type="project" value="UniProtKB-UniRule"/>
</dbReference>
<dbReference type="GO" id="GO:0009052">
    <property type="term" value="P:pentose-phosphate shunt, non-oxidative branch"/>
    <property type="evidence" value="ECO:0007669"/>
    <property type="project" value="UniProtKB-UniRule"/>
</dbReference>
<dbReference type="CDD" id="cd01398">
    <property type="entry name" value="RPI_A"/>
    <property type="match status" value="1"/>
</dbReference>
<dbReference type="FunFam" id="3.40.50.1360:FF:000001">
    <property type="entry name" value="Ribose-5-phosphate isomerase A"/>
    <property type="match status" value="1"/>
</dbReference>
<dbReference type="Gene3D" id="3.30.70.260">
    <property type="match status" value="1"/>
</dbReference>
<dbReference type="Gene3D" id="3.40.50.1360">
    <property type="match status" value="1"/>
</dbReference>
<dbReference type="HAMAP" id="MF_00170">
    <property type="entry name" value="Rib_5P_isom_A"/>
    <property type="match status" value="1"/>
</dbReference>
<dbReference type="InterPro" id="IPR037171">
    <property type="entry name" value="NagB/RpiA_transferase-like"/>
</dbReference>
<dbReference type="InterPro" id="IPR050262">
    <property type="entry name" value="Ribose-5P_isomerase"/>
</dbReference>
<dbReference type="InterPro" id="IPR020672">
    <property type="entry name" value="Ribose5P_isomerase_typA_subgr"/>
</dbReference>
<dbReference type="InterPro" id="IPR004788">
    <property type="entry name" value="Ribose5P_isomerase_type_A"/>
</dbReference>
<dbReference type="NCBIfam" id="NF001924">
    <property type="entry name" value="PRK00702.1"/>
    <property type="match status" value="1"/>
</dbReference>
<dbReference type="NCBIfam" id="TIGR00021">
    <property type="entry name" value="rpiA"/>
    <property type="match status" value="1"/>
</dbReference>
<dbReference type="PANTHER" id="PTHR43748">
    <property type="entry name" value="RIBOSE-5-PHOSPHATE ISOMERASE 3, CHLOROPLASTIC-RELATED"/>
    <property type="match status" value="1"/>
</dbReference>
<dbReference type="PANTHER" id="PTHR43748:SF3">
    <property type="entry name" value="RIBOSE-5-PHOSPHATE ISOMERASE 3, CHLOROPLASTIC-RELATED"/>
    <property type="match status" value="1"/>
</dbReference>
<dbReference type="Pfam" id="PF06026">
    <property type="entry name" value="Rib_5-P_isom_A"/>
    <property type="match status" value="1"/>
</dbReference>
<dbReference type="SUPFAM" id="SSF75445">
    <property type="entry name" value="D-ribose-5-phosphate isomerase (RpiA), lid domain"/>
    <property type="match status" value="1"/>
</dbReference>
<dbReference type="SUPFAM" id="SSF100950">
    <property type="entry name" value="NagB/RpiA/CoA transferase-like"/>
    <property type="match status" value="1"/>
</dbReference>
<gene>
    <name evidence="1" type="primary">rpiA</name>
    <name type="ordered locus">LMOf2365_0996</name>
</gene>
<accession>Q721J0</accession>
<comment type="function">
    <text evidence="1">Catalyzes the reversible conversion of ribose-5-phosphate to ribulose 5-phosphate.</text>
</comment>
<comment type="catalytic activity">
    <reaction evidence="1">
        <text>aldehydo-D-ribose 5-phosphate = D-ribulose 5-phosphate</text>
        <dbReference type="Rhea" id="RHEA:14657"/>
        <dbReference type="ChEBI" id="CHEBI:58121"/>
        <dbReference type="ChEBI" id="CHEBI:58273"/>
        <dbReference type="EC" id="5.3.1.6"/>
    </reaction>
</comment>
<comment type="pathway">
    <text evidence="1">Carbohydrate degradation; pentose phosphate pathway; D-ribose 5-phosphate from D-ribulose 5-phosphate (non-oxidative stage): step 1/1.</text>
</comment>
<comment type="subunit">
    <text evidence="1">Homodimer.</text>
</comment>
<comment type="similarity">
    <text evidence="1">Belongs to the ribose 5-phosphate isomerase family.</text>
</comment>
<proteinExistence type="inferred from homology"/>
<reference key="1">
    <citation type="journal article" date="2004" name="Nucleic Acids Res.">
        <title>Whole genome comparisons of serotype 4b and 1/2a strains of the food-borne pathogen Listeria monocytogenes reveal new insights into the core genome components of this species.</title>
        <authorList>
            <person name="Nelson K.E."/>
            <person name="Fouts D.E."/>
            <person name="Mongodin E.F."/>
            <person name="Ravel J."/>
            <person name="DeBoy R.T."/>
            <person name="Kolonay J.F."/>
            <person name="Rasko D.A."/>
            <person name="Angiuoli S.V."/>
            <person name="Gill S.R."/>
            <person name="Paulsen I.T."/>
            <person name="Peterson J.D."/>
            <person name="White O."/>
            <person name="Nelson W.C."/>
            <person name="Nierman W.C."/>
            <person name="Beanan M.J."/>
            <person name="Brinkac L.M."/>
            <person name="Daugherty S.C."/>
            <person name="Dodson R.J."/>
            <person name="Durkin A.S."/>
            <person name="Madupu R."/>
            <person name="Haft D.H."/>
            <person name="Selengut J."/>
            <person name="Van Aken S.E."/>
            <person name="Khouri H.M."/>
            <person name="Fedorova N."/>
            <person name="Forberger H.A."/>
            <person name="Tran B."/>
            <person name="Kathariou S."/>
            <person name="Wonderling L.D."/>
            <person name="Uhlich G.A."/>
            <person name="Bayles D.O."/>
            <person name="Luchansky J.B."/>
            <person name="Fraser C.M."/>
        </authorList>
    </citation>
    <scope>NUCLEOTIDE SEQUENCE [LARGE SCALE GENOMIC DNA]</scope>
    <source>
        <strain>F2365</strain>
    </source>
</reference>
<keyword id="KW-0413">Isomerase</keyword>
<evidence type="ECO:0000255" key="1">
    <source>
        <dbReference type="HAMAP-Rule" id="MF_00170"/>
    </source>
</evidence>
<organism>
    <name type="scientific">Listeria monocytogenes serotype 4b (strain F2365)</name>
    <dbReference type="NCBI Taxonomy" id="265669"/>
    <lineage>
        <taxon>Bacteria</taxon>
        <taxon>Bacillati</taxon>
        <taxon>Bacillota</taxon>
        <taxon>Bacilli</taxon>
        <taxon>Bacillales</taxon>
        <taxon>Listeriaceae</taxon>
        <taxon>Listeria</taxon>
    </lineage>
</organism>
<feature type="chain" id="PRO_0000158433" description="Ribose-5-phosphate isomerase A">
    <location>
        <begin position="1"/>
        <end position="224"/>
    </location>
</feature>
<feature type="active site" description="Proton acceptor" evidence="1">
    <location>
        <position position="103"/>
    </location>
</feature>
<feature type="binding site" evidence="1">
    <location>
        <begin position="26"/>
        <end position="29"/>
    </location>
    <ligand>
        <name>substrate</name>
    </ligand>
</feature>
<feature type="binding site" evidence="1">
    <location>
        <begin position="81"/>
        <end position="84"/>
    </location>
    <ligand>
        <name>substrate</name>
    </ligand>
</feature>
<feature type="binding site" evidence="1">
    <location>
        <begin position="94"/>
        <end position="97"/>
    </location>
    <ligand>
        <name>substrate</name>
    </ligand>
</feature>
<feature type="binding site" evidence="1">
    <location>
        <position position="121"/>
    </location>
    <ligand>
        <name>substrate</name>
    </ligand>
</feature>
<sequence>MINQKKIAGEKACEWIKDGMVVGLGTGSTVYYTIEKLGEMVNNGLHITGVATSEETSKQAQNLGIPLKSLNDVAEIDITIDGADEIDTDFQGIKGGGGALLREKMVASASLKNIWVVSEEKLVRNLGKFPLPIEVIPFGWKQIERTLEKEHIQTILRRQSSGEIYVTNNGNYILDIVNQTFRDAEMWQEKLAQIPGIVEHGLFLHYVDIIVCAKANGEIELIKK</sequence>
<protein>
    <recommendedName>
        <fullName evidence="1">Ribose-5-phosphate isomerase A</fullName>
        <ecNumber evidence="1">5.3.1.6</ecNumber>
    </recommendedName>
    <alternativeName>
        <fullName evidence="1">Phosphoriboisomerase A</fullName>
        <shortName evidence="1">PRI</shortName>
    </alternativeName>
</protein>